<keyword id="KW-0489">Methyltransferase</keyword>
<keyword id="KW-1185">Reference proteome</keyword>
<keyword id="KW-0949">S-adenosyl-L-methionine</keyword>
<keyword id="KW-0808">Transferase</keyword>
<feature type="chain" id="PRO_0000361132" description="Putative S-adenosyl-L-methionine-dependent methyltransferase Mb1758c">
    <location>
        <begin position="1"/>
        <end position="312"/>
    </location>
</feature>
<feature type="binding site" evidence="1">
    <location>
        <position position="130"/>
    </location>
    <ligand>
        <name>S-adenosyl-L-methionine</name>
        <dbReference type="ChEBI" id="CHEBI:59789"/>
    </ligand>
</feature>
<feature type="binding site" evidence="1">
    <location>
        <begin position="159"/>
        <end position="160"/>
    </location>
    <ligand>
        <name>S-adenosyl-L-methionine</name>
        <dbReference type="ChEBI" id="CHEBI:59789"/>
    </ligand>
</feature>
<evidence type="ECO:0000250" key="1"/>
<evidence type="ECO:0000305" key="2"/>
<comment type="function">
    <text evidence="1">Exhibits S-adenosyl-L-methionine-dependent methyltransferase activity.</text>
</comment>
<comment type="similarity">
    <text evidence="2">Belongs to the UPF0677 family.</text>
</comment>
<reference key="1">
    <citation type="journal article" date="2003" name="Proc. Natl. Acad. Sci. U.S.A.">
        <title>The complete genome sequence of Mycobacterium bovis.</title>
        <authorList>
            <person name="Garnier T."/>
            <person name="Eiglmeier K."/>
            <person name="Camus J.-C."/>
            <person name="Medina N."/>
            <person name="Mansoor H."/>
            <person name="Pryor M."/>
            <person name="Duthoy S."/>
            <person name="Grondin S."/>
            <person name="Lacroix C."/>
            <person name="Monsempe C."/>
            <person name="Simon S."/>
            <person name="Harris B."/>
            <person name="Atkin R."/>
            <person name="Doggett J."/>
            <person name="Mayes R."/>
            <person name="Keating L."/>
            <person name="Wheeler P.R."/>
            <person name="Parkhill J."/>
            <person name="Barrell B.G."/>
            <person name="Cole S.T."/>
            <person name="Gordon S.V."/>
            <person name="Hewinson R.G."/>
        </authorList>
    </citation>
    <scope>NUCLEOTIDE SEQUENCE [LARGE SCALE GENOMIC DNA]</scope>
    <source>
        <strain>ATCC BAA-935 / AF2122/97</strain>
    </source>
</reference>
<reference key="2">
    <citation type="journal article" date="2017" name="Genome Announc.">
        <title>Updated reference genome sequence and annotation of Mycobacterium bovis AF2122/97.</title>
        <authorList>
            <person name="Malone K.M."/>
            <person name="Farrell D."/>
            <person name="Stuber T.P."/>
            <person name="Schubert O.T."/>
            <person name="Aebersold R."/>
            <person name="Robbe-Austerman S."/>
            <person name="Gordon S.V."/>
        </authorList>
    </citation>
    <scope>NUCLEOTIDE SEQUENCE [LARGE SCALE GENOMIC DNA]</scope>
    <scope>GENOME REANNOTATION</scope>
    <source>
        <strain>ATCC BAA-935 / AF2122/97</strain>
    </source>
</reference>
<accession>Q7TZP5</accession>
<accession>A0A1R3XZ40</accession>
<accession>X2BIS2</accession>
<organism>
    <name type="scientific">Mycobacterium bovis (strain ATCC BAA-935 / AF2122/97)</name>
    <dbReference type="NCBI Taxonomy" id="233413"/>
    <lineage>
        <taxon>Bacteria</taxon>
        <taxon>Bacillati</taxon>
        <taxon>Actinomycetota</taxon>
        <taxon>Actinomycetes</taxon>
        <taxon>Mycobacteriales</taxon>
        <taxon>Mycobacteriaceae</taxon>
        <taxon>Mycobacterium</taxon>
        <taxon>Mycobacterium tuberculosis complex</taxon>
    </lineage>
</organism>
<gene>
    <name type="ordered locus">BQ2027_MB1758C</name>
</gene>
<dbReference type="EC" id="2.1.1.-"/>
<dbReference type="EMBL" id="LT708304">
    <property type="protein sequence ID" value="SIU00361.1"/>
    <property type="molecule type" value="Genomic_DNA"/>
</dbReference>
<dbReference type="RefSeq" id="NP_855410.1">
    <property type="nucleotide sequence ID" value="NC_002945.3"/>
</dbReference>
<dbReference type="RefSeq" id="WP_003408497.1">
    <property type="nucleotide sequence ID" value="NC_002945.4"/>
</dbReference>
<dbReference type="SMR" id="Q7TZP5"/>
<dbReference type="KEGG" id="mbo:BQ2027_MB1758C"/>
<dbReference type="PATRIC" id="fig|233413.5.peg.1919"/>
<dbReference type="Proteomes" id="UP000001419">
    <property type="component" value="Chromosome"/>
</dbReference>
<dbReference type="GO" id="GO:0008168">
    <property type="term" value="F:methyltransferase activity"/>
    <property type="evidence" value="ECO:0007669"/>
    <property type="project" value="UniProtKB-KW"/>
</dbReference>
<dbReference type="GO" id="GO:0032259">
    <property type="term" value="P:methylation"/>
    <property type="evidence" value="ECO:0007669"/>
    <property type="project" value="UniProtKB-KW"/>
</dbReference>
<dbReference type="FunFam" id="3.40.50.150:FF:000152">
    <property type="entry name" value="S-adenosyl-L-methionine-dependent methyltransferase"/>
    <property type="match status" value="1"/>
</dbReference>
<dbReference type="Gene3D" id="3.40.50.150">
    <property type="entry name" value="Vaccinia Virus protein VP39"/>
    <property type="match status" value="1"/>
</dbReference>
<dbReference type="InterPro" id="IPR007213">
    <property type="entry name" value="Ppm1/Ppm2/Tcmp"/>
</dbReference>
<dbReference type="InterPro" id="IPR029063">
    <property type="entry name" value="SAM-dependent_MTases_sf"/>
</dbReference>
<dbReference type="InterPro" id="IPR011610">
    <property type="entry name" value="SAM_mthyl_Trfase_ML2640-like"/>
</dbReference>
<dbReference type="NCBIfam" id="TIGR00027">
    <property type="entry name" value="mthyl_TIGR00027"/>
    <property type="match status" value="1"/>
</dbReference>
<dbReference type="PANTHER" id="PTHR43619">
    <property type="entry name" value="S-ADENOSYL-L-METHIONINE-DEPENDENT METHYLTRANSFERASE YKTD-RELATED"/>
    <property type="match status" value="1"/>
</dbReference>
<dbReference type="PANTHER" id="PTHR43619:SF2">
    <property type="entry name" value="S-ADENOSYL-L-METHIONINE-DEPENDENT METHYLTRANSFERASES SUPERFAMILY PROTEIN"/>
    <property type="match status" value="1"/>
</dbReference>
<dbReference type="Pfam" id="PF04072">
    <property type="entry name" value="LCM"/>
    <property type="match status" value="1"/>
</dbReference>
<dbReference type="SUPFAM" id="SSF53335">
    <property type="entry name" value="S-adenosyl-L-methionine-dependent methyltransferases"/>
    <property type="match status" value="1"/>
</dbReference>
<proteinExistence type="inferred from homology"/>
<sequence length="312" mass="33654">MARTDDDNWDLTSSVGVTATIVAVGRALATKDPRGLINDPFAEPLVRAVGLDLFTKMMDGELDMSTIADVSPAVAQAMVYGNAVRTKYFDDYLLNATAGGIRQVAILASGLDSRAYRLPWPTRTVVYEIDQPKVMEFKTTTLADLGAEPSAIRRAVPIDLRADWPTALQAAGFDSAAPTAWLAEGLLIYLKPQTQDRLFDNITALSAPGSMVATEFVTGIADFSAERARTISNPFRCHGVDVDLASLVYTGPRNHVLDYLAAKGWQPEGVSLAELFRRSGLDVRAADDDTIFISGCLTDHSSISPPTAAGWR</sequence>
<name>Y1758_MYCBO</name>
<protein>
    <recommendedName>
        <fullName>Putative S-adenosyl-L-methionine-dependent methyltransferase Mb1758c</fullName>
        <ecNumber>2.1.1.-</ecNumber>
    </recommendedName>
</protein>